<protein>
    <recommendedName>
        <fullName evidence="1">Ribonuclease HII</fullName>
        <shortName evidence="1">RNase HII</shortName>
        <ecNumber evidence="1">3.1.26.4</ecNumber>
    </recommendedName>
</protein>
<proteinExistence type="inferred from homology"/>
<gene>
    <name evidence="1" type="primary">rnhB</name>
    <name type="ordered locus">BT_0634</name>
</gene>
<feature type="chain" id="PRO_0000334865" description="Ribonuclease HII">
    <location>
        <begin position="1"/>
        <end position="224"/>
    </location>
</feature>
<feature type="domain" description="RNase H type-2" evidence="2">
    <location>
        <begin position="33"/>
        <end position="224"/>
    </location>
</feature>
<feature type="binding site" evidence="1">
    <location>
        <position position="39"/>
    </location>
    <ligand>
        <name>a divalent metal cation</name>
        <dbReference type="ChEBI" id="CHEBI:60240"/>
    </ligand>
</feature>
<feature type="binding site" evidence="1">
    <location>
        <position position="40"/>
    </location>
    <ligand>
        <name>a divalent metal cation</name>
        <dbReference type="ChEBI" id="CHEBI:60240"/>
    </ligand>
</feature>
<feature type="binding site" evidence="1">
    <location>
        <position position="131"/>
    </location>
    <ligand>
        <name>a divalent metal cation</name>
        <dbReference type="ChEBI" id="CHEBI:60240"/>
    </ligand>
</feature>
<accession>A9IQL1</accession>
<sequence length="224" mass="24770">MYVFCICDLSKRFSLSFQPNFLCELGLQKQGFFHVAGVDEVGRGPLAGPVVTAAVILDKDRIPDGLNDSKKLSFLQRNRLYHEILQSALAASIASLCARTIDQSNIRKATLEAMRRCIIGLAVPAHYVLVDGRDIPSELPCPAMALIKGDQRSVSIAAASIIAKVTRDRMMECAGQVYTNYGLEKHVGYATLAHRRALDKYGPIVGLHRYSFAPLKERYRNDVS</sequence>
<name>RNH2_BART1</name>
<reference key="1">
    <citation type="journal article" date="2007" name="Nat. Genet.">
        <title>Genomic analysis of Bartonella identifies type IV secretion systems as host adaptability factors.</title>
        <authorList>
            <person name="Saenz H.L."/>
            <person name="Engel P."/>
            <person name="Stoeckli M.C."/>
            <person name="Lanz C."/>
            <person name="Raddatz G."/>
            <person name="Vayssier-Taussat M."/>
            <person name="Birtles R."/>
            <person name="Schuster S.C."/>
            <person name="Dehio C."/>
        </authorList>
    </citation>
    <scope>NUCLEOTIDE SEQUENCE [LARGE SCALE GENOMIC DNA]</scope>
    <source>
        <strain>CIP 105476 / IBS 506</strain>
    </source>
</reference>
<keyword id="KW-0963">Cytoplasm</keyword>
<keyword id="KW-0255">Endonuclease</keyword>
<keyword id="KW-0378">Hydrolase</keyword>
<keyword id="KW-0464">Manganese</keyword>
<keyword id="KW-0479">Metal-binding</keyword>
<keyword id="KW-0540">Nuclease</keyword>
<comment type="function">
    <text evidence="1">Endonuclease that specifically degrades the RNA of RNA-DNA hybrids.</text>
</comment>
<comment type="catalytic activity">
    <reaction evidence="1">
        <text>Endonucleolytic cleavage to 5'-phosphomonoester.</text>
        <dbReference type="EC" id="3.1.26.4"/>
    </reaction>
</comment>
<comment type="cofactor">
    <cofactor evidence="1">
        <name>Mn(2+)</name>
        <dbReference type="ChEBI" id="CHEBI:29035"/>
    </cofactor>
    <cofactor evidence="1">
        <name>Mg(2+)</name>
        <dbReference type="ChEBI" id="CHEBI:18420"/>
    </cofactor>
    <text evidence="1">Manganese or magnesium. Binds 1 divalent metal ion per monomer in the absence of substrate. May bind a second metal ion after substrate binding.</text>
</comment>
<comment type="subcellular location">
    <subcellularLocation>
        <location evidence="1">Cytoplasm</location>
    </subcellularLocation>
</comment>
<comment type="similarity">
    <text evidence="1">Belongs to the RNase HII family.</text>
</comment>
<evidence type="ECO:0000255" key="1">
    <source>
        <dbReference type="HAMAP-Rule" id="MF_00052"/>
    </source>
</evidence>
<evidence type="ECO:0000255" key="2">
    <source>
        <dbReference type="PROSITE-ProRule" id="PRU01319"/>
    </source>
</evidence>
<dbReference type="EC" id="3.1.26.4" evidence="1"/>
<dbReference type="EMBL" id="AM260525">
    <property type="protein sequence ID" value="CAK01071.1"/>
    <property type="molecule type" value="Genomic_DNA"/>
</dbReference>
<dbReference type="RefSeq" id="WP_012231177.1">
    <property type="nucleotide sequence ID" value="NC_010161.1"/>
</dbReference>
<dbReference type="SMR" id="A9IQL1"/>
<dbReference type="KEGG" id="btr:BT_0634"/>
<dbReference type="eggNOG" id="COG0164">
    <property type="taxonomic scope" value="Bacteria"/>
</dbReference>
<dbReference type="HOGENOM" id="CLU_036532_3_2_5"/>
<dbReference type="Proteomes" id="UP000001592">
    <property type="component" value="Chromosome"/>
</dbReference>
<dbReference type="GO" id="GO:0005737">
    <property type="term" value="C:cytoplasm"/>
    <property type="evidence" value="ECO:0007669"/>
    <property type="project" value="UniProtKB-SubCell"/>
</dbReference>
<dbReference type="GO" id="GO:0032299">
    <property type="term" value="C:ribonuclease H2 complex"/>
    <property type="evidence" value="ECO:0007669"/>
    <property type="project" value="TreeGrafter"/>
</dbReference>
<dbReference type="GO" id="GO:0030145">
    <property type="term" value="F:manganese ion binding"/>
    <property type="evidence" value="ECO:0007669"/>
    <property type="project" value="UniProtKB-UniRule"/>
</dbReference>
<dbReference type="GO" id="GO:0003723">
    <property type="term" value="F:RNA binding"/>
    <property type="evidence" value="ECO:0007669"/>
    <property type="project" value="InterPro"/>
</dbReference>
<dbReference type="GO" id="GO:0004523">
    <property type="term" value="F:RNA-DNA hybrid ribonuclease activity"/>
    <property type="evidence" value="ECO:0007669"/>
    <property type="project" value="UniProtKB-UniRule"/>
</dbReference>
<dbReference type="GO" id="GO:0043137">
    <property type="term" value="P:DNA replication, removal of RNA primer"/>
    <property type="evidence" value="ECO:0007669"/>
    <property type="project" value="TreeGrafter"/>
</dbReference>
<dbReference type="GO" id="GO:0006298">
    <property type="term" value="P:mismatch repair"/>
    <property type="evidence" value="ECO:0007669"/>
    <property type="project" value="TreeGrafter"/>
</dbReference>
<dbReference type="CDD" id="cd07182">
    <property type="entry name" value="RNase_HII_bacteria_HII_like"/>
    <property type="match status" value="1"/>
</dbReference>
<dbReference type="Gene3D" id="3.30.420.10">
    <property type="entry name" value="Ribonuclease H-like superfamily/Ribonuclease H"/>
    <property type="match status" value="1"/>
</dbReference>
<dbReference type="HAMAP" id="MF_00052_B">
    <property type="entry name" value="RNase_HII_B"/>
    <property type="match status" value="1"/>
</dbReference>
<dbReference type="InterPro" id="IPR022898">
    <property type="entry name" value="RNase_HII"/>
</dbReference>
<dbReference type="InterPro" id="IPR001352">
    <property type="entry name" value="RNase_HII/HIII"/>
</dbReference>
<dbReference type="InterPro" id="IPR024567">
    <property type="entry name" value="RNase_HII/HIII_dom"/>
</dbReference>
<dbReference type="InterPro" id="IPR012337">
    <property type="entry name" value="RNaseH-like_sf"/>
</dbReference>
<dbReference type="InterPro" id="IPR036397">
    <property type="entry name" value="RNaseH_sf"/>
</dbReference>
<dbReference type="NCBIfam" id="NF000595">
    <property type="entry name" value="PRK00015.1-3"/>
    <property type="match status" value="1"/>
</dbReference>
<dbReference type="PANTHER" id="PTHR10954">
    <property type="entry name" value="RIBONUCLEASE H2 SUBUNIT A"/>
    <property type="match status" value="1"/>
</dbReference>
<dbReference type="PANTHER" id="PTHR10954:SF18">
    <property type="entry name" value="RIBONUCLEASE HII"/>
    <property type="match status" value="1"/>
</dbReference>
<dbReference type="Pfam" id="PF01351">
    <property type="entry name" value="RNase_HII"/>
    <property type="match status" value="1"/>
</dbReference>
<dbReference type="SUPFAM" id="SSF53098">
    <property type="entry name" value="Ribonuclease H-like"/>
    <property type="match status" value="1"/>
</dbReference>
<dbReference type="PROSITE" id="PS51975">
    <property type="entry name" value="RNASE_H_2"/>
    <property type="match status" value="1"/>
</dbReference>
<organism>
    <name type="scientific">Bartonella tribocorum (strain CIP 105476 / IBS 506)</name>
    <dbReference type="NCBI Taxonomy" id="382640"/>
    <lineage>
        <taxon>Bacteria</taxon>
        <taxon>Pseudomonadati</taxon>
        <taxon>Pseudomonadota</taxon>
        <taxon>Alphaproteobacteria</taxon>
        <taxon>Hyphomicrobiales</taxon>
        <taxon>Bartonellaceae</taxon>
        <taxon>Bartonella</taxon>
    </lineage>
</organism>